<gene>
    <name evidence="1" type="primary">clpX</name>
    <name type="ordered locus">BG0628</name>
</gene>
<keyword id="KW-0067">ATP-binding</keyword>
<keyword id="KW-0143">Chaperone</keyword>
<keyword id="KW-0479">Metal-binding</keyword>
<keyword id="KW-0547">Nucleotide-binding</keyword>
<keyword id="KW-0862">Zinc</keyword>
<reference key="1">
    <citation type="journal article" date="2004" name="Nucleic Acids Res.">
        <title>Comparative analysis of the Borrelia garinii genome.</title>
        <authorList>
            <person name="Gloeckner G."/>
            <person name="Lehmann R."/>
            <person name="Romualdi A."/>
            <person name="Pradella S."/>
            <person name="Schulte-Spechtel U."/>
            <person name="Schilhabel M."/>
            <person name="Wilske B."/>
            <person name="Suehnel J."/>
            <person name="Platzer M."/>
        </authorList>
    </citation>
    <scope>NUCLEOTIDE SEQUENCE [LARGE SCALE GENOMIC DNA]</scope>
    <source>
        <strain>ATCC BAA-2496 / DSM 23469 / PBi</strain>
    </source>
</reference>
<protein>
    <recommendedName>
        <fullName evidence="1">ATP-dependent Clp protease ATP-binding subunit ClpX</fullName>
    </recommendedName>
</protein>
<accession>Q660R1</accession>
<feature type="chain" id="PRO_0000160321" description="ATP-dependent Clp protease ATP-binding subunit ClpX">
    <location>
        <begin position="1"/>
        <end position="430"/>
    </location>
</feature>
<feature type="domain" description="ClpX-type ZB" evidence="2">
    <location>
        <begin position="1"/>
        <end position="54"/>
    </location>
</feature>
<feature type="binding site" evidence="2">
    <location>
        <position position="12"/>
    </location>
    <ligand>
        <name>Zn(2+)</name>
        <dbReference type="ChEBI" id="CHEBI:29105"/>
    </ligand>
</feature>
<feature type="binding site" evidence="2">
    <location>
        <position position="15"/>
    </location>
    <ligand>
        <name>Zn(2+)</name>
        <dbReference type="ChEBI" id="CHEBI:29105"/>
    </ligand>
</feature>
<feature type="binding site" evidence="2">
    <location>
        <position position="35"/>
    </location>
    <ligand>
        <name>Zn(2+)</name>
        <dbReference type="ChEBI" id="CHEBI:29105"/>
    </ligand>
</feature>
<feature type="binding site" evidence="2">
    <location>
        <position position="38"/>
    </location>
    <ligand>
        <name>Zn(2+)</name>
        <dbReference type="ChEBI" id="CHEBI:29105"/>
    </ligand>
</feature>
<feature type="binding site" evidence="1">
    <location>
        <begin position="118"/>
        <end position="125"/>
    </location>
    <ligand>
        <name>ATP</name>
        <dbReference type="ChEBI" id="CHEBI:30616"/>
    </ligand>
</feature>
<sequence>MARLKGQKVKECSFCGLSVAELGGNVVISNGVAICPECSKICHNLFKEKLSNPLDSKSNGLPTPKQLKDHLDMHVVGQEDAKKVLSVAVYNHYKRILKNNKYDNGIEIEKSNILLVGPTGSGKTLLAKTLAAEMNVPFAIADATTLTEAGYVGEDVENILLKLIHAAHGDVSLAEKGIIYIDEIDKIAKKNENVSITRDVSGEGVQQALLKIIEGTIANVPPRGGRKHPYEDTIEINTQNILFICGGAFVGLENIVKNRINKSSIGFSAIEKKNIREDTSLKYLEMEDLIKFGLIPEFVGRLPVHSYLEKLNKEDLMRILVDPQNSIIKQYYHMFKMDNVELVFEKDALESIVDEAILKNTGARGLRSILEGLLKDVMFEVPSISKTKKVIVTKESVLNTDINPLILVGNAIKKPWAKELYEINLKYDKK</sequence>
<proteinExistence type="inferred from homology"/>
<comment type="function">
    <text evidence="1">ATP-dependent specificity component of the Clp protease. It directs the protease to specific substrates. Can perform chaperone functions in the absence of ClpP.</text>
</comment>
<comment type="subunit">
    <text evidence="1">Component of the ClpX-ClpP complex. Forms a hexameric ring that, in the presence of ATP, binds to fourteen ClpP subunits assembled into a disk-like structure with a central cavity, resembling the structure of eukaryotic proteasomes.</text>
</comment>
<comment type="similarity">
    <text evidence="1">Belongs to the ClpX chaperone family.</text>
</comment>
<comment type="sequence caution" evidence="3">
    <conflict type="erroneous initiation">
        <sequence resource="EMBL-CDS" id="AAU07460"/>
    </conflict>
</comment>
<dbReference type="EMBL" id="CP000013">
    <property type="protein sequence ID" value="AAU07460.1"/>
    <property type="status" value="ALT_INIT"/>
    <property type="molecule type" value="Genomic_DNA"/>
</dbReference>
<dbReference type="RefSeq" id="WP_044007959.1">
    <property type="nucleotide sequence ID" value="NZ_CP028872.1"/>
</dbReference>
<dbReference type="SMR" id="Q660R1"/>
<dbReference type="GeneID" id="45161408"/>
<dbReference type="KEGG" id="bga:BG0628"/>
<dbReference type="eggNOG" id="COG1219">
    <property type="taxonomic scope" value="Bacteria"/>
</dbReference>
<dbReference type="HOGENOM" id="CLU_014218_8_2_12"/>
<dbReference type="OrthoDB" id="9804062at2"/>
<dbReference type="Proteomes" id="UP000002276">
    <property type="component" value="Chromosome"/>
</dbReference>
<dbReference type="GO" id="GO:0009376">
    <property type="term" value="C:HslUV protease complex"/>
    <property type="evidence" value="ECO:0007669"/>
    <property type="project" value="TreeGrafter"/>
</dbReference>
<dbReference type="GO" id="GO:0005524">
    <property type="term" value="F:ATP binding"/>
    <property type="evidence" value="ECO:0007669"/>
    <property type="project" value="UniProtKB-UniRule"/>
</dbReference>
<dbReference type="GO" id="GO:0016887">
    <property type="term" value="F:ATP hydrolysis activity"/>
    <property type="evidence" value="ECO:0007669"/>
    <property type="project" value="InterPro"/>
</dbReference>
<dbReference type="GO" id="GO:0140662">
    <property type="term" value="F:ATP-dependent protein folding chaperone"/>
    <property type="evidence" value="ECO:0007669"/>
    <property type="project" value="InterPro"/>
</dbReference>
<dbReference type="GO" id="GO:0046983">
    <property type="term" value="F:protein dimerization activity"/>
    <property type="evidence" value="ECO:0007669"/>
    <property type="project" value="InterPro"/>
</dbReference>
<dbReference type="GO" id="GO:0051082">
    <property type="term" value="F:unfolded protein binding"/>
    <property type="evidence" value="ECO:0007669"/>
    <property type="project" value="UniProtKB-UniRule"/>
</dbReference>
<dbReference type="GO" id="GO:0008270">
    <property type="term" value="F:zinc ion binding"/>
    <property type="evidence" value="ECO:0007669"/>
    <property type="project" value="InterPro"/>
</dbReference>
<dbReference type="GO" id="GO:0051301">
    <property type="term" value="P:cell division"/>
    <property type="evidence" value="ECO:0007669"/>
    <property type="project" value="TreeGrafter"/>
</dbReference>
<dbReference type="GO" id="GO:0051603">
    <property type="term" value="P:proteolysis involved in protein catabolic process"/>
    <property type="evidence" value="ECO:0007669"/>
    <property type="project" value="TreeGrafter"/>
</dbReference>
<dbReference type="CDD" id="cd19497">
    <property type="entry name" value="RecA-like_ClpX"/>
    <property type="match status" value="1"/>
</dbReference>
<dbReference type="FunFam" id="1.10.8.60:FF:000002">
    <property type="entry name" value="ATP-dependent Clp protease ATP-binding subunit ClpX"/>
    <property type="match status" value="1"/>
</dbReference>
<dbReference type="FunFam" id="3.40.50.300:FF:000005">
    <property type="entry name" value="ATP-dependent Clp protease ATP-binding subunit ClpX"/>
    <property type="match status" value="1"/>
</dbReference>
<dbReference type="Gene3D" id="1.10.8.60">
    <property type="match status" value="1"/>
</dbReference>
<dbReference type="Gene3D" id="3.40.50.300">
    <property type="entry name" value="P-loop containing nucleotide triphosphate hydrolases"/>
    <property type="match status" value="1"/>
</dbReference>
<dbReference type="HAMAP" id="MF_00175">
    <property type="entry name" value="ClpX"/>
    <property type="match status" value="1"/>
</dbReference>
<dbReference type="InterPro" id="IPR003593">
    <property type="entry name" value="AAA+_ATPase"/>
</dbReference>
<dbReference type="InterPro" id="IPR050052">
    <property type="entry name" value="ATP-dep_Clp_protease_ClpX"/>
</dbReference>
<dbReference type="InterPro" id="IPR003959">
    <property type="entry name" value="ATPase_AAA_core"/>
</dbReference>
<dbReference type="InterPro" id="IPR019489">
    <property type="entry name" value="Clp_ATPase_C"/>
</dbReference>
<dbReference type="InterPro" id="IPR004487">
    <property type="entry name" value="Clp_protease_ATP-bd_su_ClpX"/>
</dbReference>
<dbReference type="InterPro" id="IPR001270">
    <property type="entry name" value="ClpA/B"/>
</dbReference>
<dbReference type="InterPro" id="IPR046425">
    <property type="entry name" value="ClpX_bact"/>
</dbReference>
<dbReference type="InterPro" id="IPR027417">
    <property type="entry name" value="P-loop_NTPase"/>
</dbReference>
<dbReference type="InterPro" id="IPR025943">
    <property type="entry name" value="Sigma_54_int_dom_ATP-bd_2"/>
</dbReference>
<dbReference type="InterPro" id="IPR010603">
    <property type="entry name" value="Znf_CppX_C4"/>
</dbReference>
<dbReference type="NCBIfam" id="TIGR00382">
    <property type="entry name" value="clpX"/>
    <property type="match status" value="1"/>
</dbReference>
<dbReference type="NCBIfam" id="NF003745">
    <property type="entry name" value="PRK05342.1"/>
    <property type="match status" value="1"/>
</dbReference>
<dbReference type="PANTHER" id="PTHR48102:SF7">
    <property type="entry name" value="ATP-DEPENDENT CLP PROTEASE ATP-BINDING SUBUNIT CLPX-LIKE, MITOCHONDRIAL"/>
    <property type="match status" value="1"/>
</dbReference>
<dbReference type="PANTHER" id="PTHR48102">
    <property type="entry name" value="ATP-DEPENDENT CLP PROTEASE ATP-BINDING SUBUNIT CLPX-LIKE, MITOCHONDRIAL-RELATED"/>
    <property type="match status" value="1"/>
</dbReference>
<dbReference type="Pfam" id="PF07724">
    <property type="entry name" value="AAA_2"/>
    <property type="match status" value="1"/>
</dbReference>
<dbReference type="Pfam" id="PF10431">
    <property type="entry name" value="ClpB_D2-small"/>
    <property type="match status" value="1"/>
</dbReference>
<dbReference type="Pfam" id="PF06689">
    <property type="entry name" value="zf-C4_ClpX"/>
    <property type="match status" value="1"/>
</dbReference>
<dbReference type="PRINTS" id="PR00300">
    <property type="entry name" value="CLPPROTEASEA"/>
</dbReference>
<dbReference type="SMART" id="SM00382">
    <property type="entry name" value="AAA"/>
    <property type="match status" value="1"/>
</dbReference>
<dbReference type="SMART" id="SM01086">
    <property type="entry name" value="ClpB_D2-small"/>
    <property type="match status" value="1"/>
</dbReference>
<dbReference type="SMART" id="SM00994">
    <property type="entry name" value="zf-C4_ClpX"/>
    <property type="match status" value="1"/>
</dbReference>
<dbReference type="SUPFAM" id="SSF52540">
    <property type="entry name" value="P-loop containing nucleoside triphosphate hydrolases"/>
    <property type="match status" value="1"/>
</dbReference>
<dbReference type="PROSITE" id="PS51902">
    <property type="entry name" value="CLPX_ZB"/>
    <property type="match status" value="1"/>
</dbReference>
<name>CLPX_BORGP</name>
<organism>
    <name type="scientific">Borrelia garinii subsp. bavariensis (strain ATCC BAA-2496 / DSM 23469 / PBi)</name>
    <name type="common">Borreliella bavariensis</name>
    <dbReference type="NCBI Taxonomy" id="290434"/>
    <lineage>
        <taxon>Bacteria</taxon>
        <taxon>Pseudomonadati</taxon>
        <taxon>Spirochaetota</taxon>
        <taxon>Spirochaetia</taxon>
        <taxon>Spirochaetales</taxon>
        <taxon>Borreliaceae</taxon>
        <taxon>Borreliella</taxon>
    </lineage>
</organism>
<evidence type="ECO:0000255" key="1">
    <source>
        <dbReference type="HAMAP-Rule" id="MF_00175"/>
    </source>
</evidence>
<evidence type="ECO:0000255" key="2">
    <source>
        <dbReference type="PROSITE-ProRule" id="PRU01250"/>
    </source>
</evidence>
<evidence type="ECO:0000305" key="3"/>